<dbReference type="EC" id="7.4.2.8" evidence="1"/>
<dbReference type="EMBL" id="CP000024">
    <property type="protein sequence ID" value="AAV63248.1"/>
    <property type="molecule type" value="Genomic_DNA"/>
</dbReference>
<dbReference type="RefSeq" id="WP_011227538.1">
    <property type="nucleotide sequence ID" value="NC_006449.1"/>
</dbReference>
<dbReference type="SMR" id="Q5LY68"/>
<dbReference type="KEGG" id="stc:str1730"/>
<dbReference type="HOGENOM" id="CLU_005314_3_0_9"/>
<dbReference type="GO" id="GO:0031522">
    <property type="term" value="C:cell envelope Sec protein transport complex"/>
    <property type="evidence" value="ECO:0007669"/>
    <property type="project" value="TreeGrafter"/>
</dbReference>
<dbReference type="GO" id="GO:0005829">
    <property type="term" value="C:cytosol"/>
    <property type="evidence" value="ECO:0007669"/>
    <property type="project" value="TreeGrafter"/>
</dbReference>
<dbReference type="GO" id="GO:0005886">
    <property type="term" value="C:plasma membrane"/>
    <property type="evidence" value="ECO:0007669"/>
    <property type="project" value="UniProtKB-SubCell"/>
</dbReference>
<dbReference type="GO" id="GO:0005524">
    <property type="term" value="F:ATP binding"/>
    <property type="evidence" value="ECO:0007669"/>
    <property type="project" value="UniProtKB-UniRule"/>
</dbReference>
<dbReference type="GO" id="GO:0046872">
    <property type="term" value="F:metal ion binding"/>
    <property type="evidence" value="ECO:0007669"/>
    <property type="project" value="UniProtKB-KW"/>
</dbReference>
<dbReference type="GO" id="GO:0008564">
    <property type="term" value="F:protein-exporting ATPase activity"/>
    <property type="evidence" value="ECO:0007669"/>
    <property type="project" value="UniProtKB-EC"/>
</dbReference>
<dbReference type="GO" id="GO:0065002">
    <property type="term" value="P:intracellular protein transmembrane transport"/>
    <property type="evidence" value="ECO:0007669"/>
    <property type="project" value="UniProtKB-UniRule"/>
</dbReference>
<dbReference type="GO" id="GO:0017038">
    <property type="term" value="P:protein import"/>
    <property type="evidence" value="ECO:0007669"/>
    <property type="project" value="InterPro"/>
</dbReference>
<dbReference type="GO" id="GO:0006605">
    <property type="term" value="P:protein targeting"/>
    <property type="evidence" value="ECO:0007669"/>
    <property type="project" value="UniProtKB-UniRule"/>
</dbReference>
<dbReference type="GO" id="GO:0043952">
    <property type="term" value="P:protein transport by the Sec complex"/>
    <property type="evidence" value="ECO:0007669"/>
    <property type="project" value="TreeGrafter"/>
</dbReference>
<dbReference type="CDD" id="cd17928">
    <property type="entry name" value="DEXDc_SecA"/>
    <property type="match status" value="1"/>
</dbReference>
<dbReference type="CDD" id="cd18803">
    <property type="entry name" value="SF2_C_secA"/>
    <property type="match status" value="1"/>
</dbReference>
<dbReference type="FunFam" id="3.40.50.300:FF:000429">
    <property type="entry name" value="Preprotein translocase subunit SecA"/>
    <property type="match status" value="1"/>
</dbReference>
<dbReference type="FunFam" id="3.90.1440.10:FF:000001">
    <property type="entry name" value="Preprotein translocase subunit SecA"/>
    <property type="match status" value="1"/>
</dbReference>
<dbReference type="Gene3D" id="1.10.3060.10">
    <property type="entry name" value="Helical scaffold and wing domains of SecA"/>
    <property type="match status" value="1"/>
</dbReference>
<dbReference type="Gene3D" id="3.40.50.300">
    <property type="entry name" value="P-loop containing nucleotide triphosphate hydrolases"/>
    <property type="match status" value="3"/>
</dbReference>
<dbReference type="Gene3D" id="3.90.1440.10">
    <property type="entry name" value="SecA, preprotein cross-linking domain"/>
    <property type="match status" value="1"/>
</dbReference>
<dbReference type="HAMAP" id="MF_01382">
    <property type="entry name" value="SecA"/>
    <property type="match status" value="1"/>
</dbReference>
<dbReference type="InterPro" id="IPR014001">
    <property type="entry name" value="Helicase_ATP-bd"/>
</dbReference>
<dbReference type="InterPro" id="IPR001650">
    <property type="entry name" value="Helicase_C-like"/>
</dbReference>
<dbReference type="InterPro" id="IPR027417">
    <property type="entry name" value="P-loop_NTPase"/>
</dbReference>
<dbReference type="InterPro" id="IPR004027">
    <property type="entry name" value="SEC_C_motif"/>
</dbReference>
<dbReference type="InterPro" id="IPR000185">
    <property type="entry name" value="SecA"/>
</dbReference>
<dbReference type="InterPro" id="IPR020937">
    <property type="entry name" value="SecA_CS"/>
</dbReference>
<dbReference type="InterPro" id="IPR011115">
    <property type="entry name" value="SecA_DEAD"/>
</dbReference>
<dbReference type="InterPro" id="IPR014018">
    <property type="entry name" value="SecA_motor_DEAD"/>
</dbReference>
<dbReference type="InterPro" id="IPR011130">
    <property type="entry name" value="SecA_preprotein_X-link_dom"/>
</dbReference>
<dbReference type="InterPro" id="IPR044722">
    <property type="entry name" value="SecA_SF2_C"/>
</dbReference>
<dbReference type="InterPro" id="IPR011116">
    <property type="entry name" value="SecA_Wing/Scaffold"/>
</dbReference>
<dbReference type="InterPro" id="IPR036266">
    <property type="entry name" value="SecA_Wing/Scaffold_sf"/>
</dbReference>
<dbReference type="InterPro" id="IPR036670">
    <property type="entry name" value="SecA_X-link_sf"/>
</dbReference>
<dbReference type="NCBIfam" id="NF006630">
    <property type="entry name" value="PRK09200.1"/>
    <property type="match status" value="1"/>
</dbReference>
<dbReference type="NCBIfam" id="TIGR00963">
    <property type="entry name" value="secA"/>
    <property type="match status" value="1"/>
</dbReference>
<dbReference type="PANTHER" id="PTHR30612:SF0">
    <property type="entry name" value="CHLOROPLAST PROTEIN-TRANSPORTING ATPASE"/>
    <property type="match status" value="1"/>
</dbReference>
<dbReference type="PANTHER" id="PTHR30612">
    <property type="entry name" value="SECA INNER MEMBRANE COMPONENT OF SEC PROTEIN SECRETION SYSTEM"/>
    <property type="match status" value="1"/>
</dbReference>
<dbReference type="Pfam" id="PF21090">
    <property type="entry name" value="P-loop_SecA"/>
    <property type="match status" value="1"/>
</dbReference>
<dbReference type="Pfam" id="PF02810">
    <property type="entry name" value="SEC-C"/>
    <property type="match status" value="1"/>
</dbReference>
<dbReference type="Pfam" id="PF07517">
    <property type="entry name" value="SecA_DEAD"/>
    <property type="match status" value="1"/>
</dbReference>
<dbReference type="Pfam" id="PF01043">
    <property type="entry name" value="SecA_PP_bind"/>
    <property type="match status" value="1"/>
</dbReference>
<dbReference type="Pfam" id="PF07516">
    <property type="entry name" value="SecA_SW"/>
    <property type="match status" value="1"/>
</dbReference>
<dbReference type="PRINTS" id="PR00906">
    <property type="entry name" value="SECA"/>
</dbReference>
<dbReference type="SMART" id="SM00957">
    <property type="entry name" value="SecA_DEAD"/>
    <property type="match status" value="1"/>
</dbReference>
<dbReference type="SMART" id="SM00958">
    <property type="entry name" value="SecA_PP_bind"/>
    <property type="match status" value="1"/>
</dbReference>
<dbReference type="SUPFAM" id="SSF81886">
    <property type="entry name" value="Helical scaffold and wing domains of SecA"/>
    <property type="match status" value="1"/>
</dbReference>
<dbReference type="SUPFAM" id="SSF52540">
    <property type="entry name" value="P-loop containing nucleoside triphosphate hydrolases"/>
    <property type="match status" value="2"/>
</dbReference>
<dbReference type="SUPFAM" id="SSF81767">
    <property type="entry name" value="Pre-protein crosslinking domain of SecA"/>
    <property type="match status" value="1"/>
</dbReference>
<dbReference type="PROSITE" id="PS01312">
    <property type="entry name" value="SECA"/>
    <property type="match status" value="1"/>
</dbReference>
<dbReference type="PROSITE" id="PS51196">
    <property type="entry name" value="SECA_MOTOR_DEAD"/>
    <property type="match status" value="1"/>
</dbReference>
<evidence type="ECO:0000255" key="1">
    <source>
        <dbReference type="HAMAP-Rule" id="MF_01382"/>
    </source>
</evidence>
<proteinExistence type="inferred from homology"/>
<sequence>MANILRKIIENDKGEIKKLEKTAKKVESYADAMAALSDEELQAKTEEFKQRYQNGESLDQLLPEAFAVVREGAKRVLGLFPYRVQIMGGIVLHHGDVAEMRTGEGKTLTATMPVYLNAISGEGVHVITVNEYLSERDATEMGELYSWLGLSVGINLSSKSPAEKREAYNCDITYSTSSEVGFDYLRDNMVVRKENMVQRPLNFALVDEVDSVLIDEARTPLIVSGPVSSETNQLYHRADAFVKTLTEDDYAIDIPTKTIGLNDSGIDKAEEFFNLENLYDIDNVALTHYIDNALRANYIMLRDIDYVVSPEQEILIVDQFTGRTMEGRRFSDGLHQAIEAKEGVPVQEETKTSASITYQNMFRMYKKLSGMTGTGKTEEDEFREIYNMRVIPIPTNRPIQRIDHDDLLYSTLDAKFRAVVQDVKRRYDKGQPVLIGTVAVETSDLISKMLVDAGIPHEVLNAKNHEKEAHIIMNAGQRGAVTIATNMAGRGTDIKLGEGVLELGGLCVIGTERHESRRIDNQLRGRSGRQGDPGESQFYLSLEDELMRRFGSDRIKHVLERLNADDEDIVIKSRMLTRQVESAQKRVEGNNYDTRKQVLQYDDVMREQREIIYAERYDVITAERDLEPEIKAMIKRTINRTVDGHSRNDQEEALKGILNFARQALVPEDAISLEDLKEVGEVTKRSVNYDAIKVYLTELADNVYDRQIKKLRSEEAIREFQKVLILMVVDNKWTDHIDALDQLRNAVGMRGYAQNNPIVEYQSESFKMFQDMIGAIEYDVTRTMMKAQIHEQSREHVNERVSTTATGNIQAHQADANGQEIDFSKVGRNDFCPCGSGKKFKNCHGRKQF</sequence>
<name>SECA_STRT1</name>
<gene>
    <name evidence="1" type="primary">secA</name>
    <name type="ordered locus">str1730</name>
</gene>
<protein>
    <recommendedName>
        <fullName evidence="1">Protein translocase subunit SecA</fullName>
        <ecNumber evidence="1">7.4.2.8</ecNumber>
    </recommendedName>
</protein>
<comment type="function">
    <text evidence="1">Part of the Sec protein translocase complex. Interacts with the SecYEG preprotein conducting channel. Has a central role in coupling the hydrolysis of ATP to the transfer of proteins into and across the cell membrane, serving as an ATP-driven molecular motor driving the stepwise translocation of polypeptide chains across the membrane.</text>
</comment>
<comment type="catalytic activity">
    <reaction evidence="1">
        <text>ATP + H2O + cellular proteinSide 1 = ADP + phosphate + cellular proteinSide 2.</text>
        <dbReference type="EC" id="7.4.2.8"/>
    </reaction>
</comment>
<comment type="cofactor">
    <cofactor evidence="1">
        <name>Zn(2+)</name>
        <dbReference type="ChEBI" id="CHEBI:29105"/>
    </cofactor>
    <text evidence="1">May bind 1 zinc ion per subunit.</text>
</comment>
<comment type="subunit">
    <text evidence="1">Monomer and homodimer. Part of the essential Sec protein translocation apparatus which comprises SecA, SecYEG and auxiliary proteins SecDF. Other proteins may also be involved.</text>
</comment>
<comment type="subcellular location">
    <subcellularLocation>
        <location evidence="1">Cell membrane</location>
        <topology evidence="1">Peripheral membrane protein</topology>
        <orientation evidence="1">Cytoplasmic side</orientation>
    </subcellularLocation>
    <subcellularLocation>
        <location evidence="1">Cytoplasm</location>
    </subcellularLocation>
    <text evidence="1">Distribution is 50-50.</text>
</comment>
<comment type="similarity">
    <text evidence="1">Belongs to the SecA family.</text>
</comment>
<accession>Q5LY68</accession>
<organism>
    <name type="scientific">Streptococcus thermophilus (strain CNRZ 1066)</name>
    <dbReference type="NCBI Taxonomy" id="299768"/>
    <lineage>
        <taxon>Bacteria</taxon>
        <taxon>Bacillati</taxon>
        <taxon>Bacillota</taxon>
        <taxon>Bacilli</taxon>
        <taxon>Lactobacillales</taxon>
        <taxon>Streptococcaceae</taxon>
        <taxon>Streptococcus</taxon>
    </lineage>
</organism>
<feature type="chain" id="PRO_0000318462" description="Protein translocase subunit SecA">
    <location>
        <begin position="1"/>
        <end position="849"/>
    </location>
</feature>
<feature type="binding site" evidence="1">
    <location>
        <position position="85"/>
    </location>
    <ligand>
        <name>ATP</name>
        <dbReference type="ChEBI" id="CHEBI:30616"/>
    </ligand>
</feature>
<feature type="binding site" evidence="1">
    <location>
        <begin position="103"/>
        <end position="107"/>
    </location>
    <ligand>
        <name>ATP</name>
        <dbReference type="ChEBI" id="CHEBI:30616"/>
    </ligand>
</feature>
<feature type="binding site" evidence="1">
    <location>
        <position position="493"/>
    </location>
    <ligand>
        <name>ATP</name>
        <dbReference type="ChEBI" id="CHEBI:30616"/>
    </ligand>
</feature>
<feature type="binding site" evidence="1">
    <location>
        <position position="832"/>
    </location>
    <ligand>
        <name>Zn(2+)</name>
        <dbReference type="ChEBI" id="CHEBI:29105"/>
    </ligand>
</feature>
<feature type="binding site" evidence="1">
    <location>
        <position position="834"/>
    </location>
    <ligand>
        <name>Zn(2+)</name>
        <dbReference type="ChEBI" id="CHEBI:29105"/>
    </ligand>
</feature>
<feature type="binding site" evidence="1">
    <location>
        <position position="843"/>
    </location>
    <ligand>
        <name>Zn(2+)</name>
        <dbReference type="ChEBI" id="CHEBI:29105"/>
    </ligand>
</feature>
<feature type="binding site" evidence="1">
    <location>
        <position position="844"/>
    </location>
    <ligand>
        <name>Zn(2+)</name>
        <dbReference type="ChEBI" id="CHEBI:29105"/>
    </ligand>
</feature>
<reference key="1">
    <citation type="journal article" date="2004" name="Nat. Biotechnol.">
        <title>Complete sequence and comparative genome analysis of the dairy bacterium Streptococcus thermophilus.</title>
        <authorList>
            <person name="Bolotin A."/>
            <person name="Quinquis B."/>
            <person name="Renault P."/>
            <person name="Sorokin A."/>
            <person name="Ehrlich S.D."/>
            <person name="Kulakauskas S."/>
            <person name="Lapidus A."/>
            <person name="Goltsman E."/>
            <person name="Mazur M."/>
            <person name="Pusch G.D."/>
            <person name="Fonstein M."/>
            <person name="Overbeek R."/>
            <person name="Kyprides N."/>
            <person name="Purnelle B."/>
            <person name="Prozzi D."/>
            <person name="Ngui K."/>
            <person name="Masuy D."/>
            <person name="Hancy F."/>
            <person name="Burteau S."/>
            <person name="Boutry M."/>
            <person name="Delcour J."/>
            <person name="Goffeau A."/>
            <person name="Hols P."/>
        </authorList>
    </citation>
    <scope>NUCLEOTIDE SEQUENCE [LARGE SCALE GENOMIC DNA]</scope>
    <source>
        <strain>CNRZ 1066</strain>
    </source>
</reference>
<keyword id="KW-0067">ATP-binding</keyword>
<keyword id="KW-1003">Cell membrane</keyword>
<keyword id="KW-0963">Cytoplasm</keyword>
<keyword id="KW-0472">Membrane</keyword>
<keyword id="KW-0479">Metal-binding</keyword>
<keyword id="KW-0547">Nucleotide-binding</keyword>
<keyword id="KW-0653">Protein transport</keyword>
<keyword id="KW-1278">Translocase</keyword>
<keyword id="KW-0811">Translocation</keyword>
<keyword id="KW-0813">Transport</keyword>
<keyword id="KW-0862">Zinc</keyword>